<evidence type="ECO:0000255" key="1">
    <source>
        <dbReference type="HAMAP-Rule" id="MF_00211"/>
    </source>
</evidence>
<reference key="1">
    <citation type="journal article" date="2001" name="Nature">
        <title>Massive gene decay in the leprosy bacillus.</title>
        <authorList>
            <person name="Cole S.T."/>
            <person name="Eiglmeier K."/>
            <person name="Parkhill J."/>
            <person name="James K.D."/>
            <person name="Thomson N.R."/>
            <person name="Wheeler P.R."/>
            <person name="Honore N."/>
            <person name="Garnier T."/>
            <person name="Churcher C.M."/>
            <person name="Harris D.E."/>
            <person name="Mungall K.L."/>
            <person name="Basham D."/>
            <person name="Brown D."/>
            <person name="Chillingworth T."/>
            <person name="Connor R."/>
            <person name="Davies R.M."/>
            <person name="Devlin K."/>
            <person name="Duthoy S."/>
            <person name="Feltwell T."/>
            <person name="Fraser A."/>
            <person name="Hamlin N."/>
            <person name="Holroyd S."/>
            <person name="Hornsby T."/>
            <person name="Jagels K."/>
            <person name="Lacroix C."/>
            <person name="Maclean J."/>
            <person name="Moule S."/>
            <person name="Murphy L.D."/>
            <person name="Oliver K."/>
            <person name="Quail M.A."/>
            <person name="Rajandream M.A."/>
            <person name="Rutherford K.M."/>
            <person name="Rutter S."/>
            <person name="Seeger K."/>
            <person name="Simon S."/>
            <person name="Simmonds M."/>
            <person name="Skelton J."/>
            <person name="Squares R."/>
            <person name="Squares S."/>
            <person name="Stevens K."/>
            <person name="Taylor K."/>
            <person name="Whitehead S."/>
            <person name="Woodward J.R."/>
            <person name="Barrell B.G."/>
        </authorList>
    </citation>
    <scope>NUCLEOTIDE SEQUENCE [LARGE SCALE GENOMIC DNA]</scope>
    <source>
        <strain>TN</strain>
    </source>
</reference>
<keyword id="KW-0028">Amino-acid biosynthesis</keyword>
<keyword id="KW-0057">Aromatic amino acid biosynthesis</keyword>
<keyword id="KW-0328">Glycosyltransferase</keyword>
<keyword id="KW-0460">Magnesium</keyword>
<keyword id="KW-0479">Metal-binding</keyword>
<keyword id="KW-1185">Reference proteome</keyword>
<keyword id="KW-0808">Transferase</keyword>
<keyword id="KW-0822">Tryptophan biosynthesis</keyword>
<protein>
    <recommendedName>
        <fullName evidence="1">Anthranilate phosphoribosyltransferase</fullName>
        <ecNumber evidence="1">2.4.2.18</ecNumber>
    </recommendedName>
</protein>
<proteinExistence type="inferred from homology"/>
<dbReference type="EC" id="2.4.2.18" evidence="1"/>
<dbReference type="EMBL" id="AL022602">
    <property type="protein sequence ID" value="CAA18700.1"/>
    <property type="molecule type" value="Genomic_DNA"/>
</dbReference>
<dbReference type="EMBL" id="AL583920">
    <property type="protein sequence ID" value="CAC31264.1"/>
    <property type="molecule type" value="Genomic_DNA"/>
</dbReference>
<dbReference type="PIR" id="E87019">
    <property type="entry name" value="E87019"/>
</dbReference>
<dbReference type="RefSeq" id="NP_301669.1">
    <property type="nucleotide sequence ID" value="NC_002677.1"/>
</dbReference>
<dbReference type="RefSeq" id="WP_010907993.1">
    <property type="nucleotide sequence ID" value="NC_002677.1"/>
</dbReference>
<dbReference type="SMR" id="O69581"/>
<dbReference type="STRING" id="272631.gene:17574709"/>
<dbReference type="KEGG" id="mle:ML0883"/>
<dbReference type="PATRIC" id="fig|272631.5.peg.1614"/>
<dbReference type="Leproma" id="ML0883"/>
<dbReference type="eggNOG" id="COG0547">
    <property type="taxonomic scope" value="Bacteria"/>
</dbReference>
<dbReference type="HOGENOM" id="CLU_034315_4_1_11"/>
<dbReference type="OrthoDB" id="9806430at2"/>
<dbReference type="UniPathway" id="UPA00035">
    <property type="reaction ID" value="UER00041"/>
</dbReference>
<dbReference type="Proteomes" id="UP000000806">
    <property type="component" value="Chromosome"/>
</dbReference>
<dbReference type="GO" id="GO:0005829">
    <property type="term" value="C:cytosol"/>
    <property type="evidence" value="ECO:0007669"/>
    <property type="project" value="TreeGrafter"/>
</dbReference>
<dbReference type="GO" id="GO:0004048">
    <property type="term" value="F:anthranilate phosphoribosyltransferase activity"/>
    <property type="evidence" value="ECO:0007669"/>
    <property type="project" value="UniProtKB-UniRule"/>
</dbReference>
<dbReference type="GO" id="GO:0000287">
    <property type="term" value="F:magnesium ion binding"/>
    <property type="evidence" value="ECO:0007669"/>
    <property type="project" value="UniProtKB-UniRule"/>
</dbReference>
<dbReference type="GO" id="GO:0000162">
    <property type="term" value="P:L-tryptophan biosynthetic process"/>
    <property type="evidence" value="ECO:0007669"/>
    <property type="project" value="UniProtKB-UniRule"/>
</dbReference>
<dbReference type="FunFam" id="1.20.970.10:FF:000006">
    <property type="entry name" value="Anthranilate phosphoribosyltransferase"/>
    <property type="match status" value="1"/>
</dbReference>
<dbReference type="FunFam" id="3.40.1030.10:FF:000002">
    <property type="entry name" value="Anthranilate phosphoribosyltransferase"/>
    <property type="match status" value="1"/>
</dbReference>
<dbReference type="Gene3D" id="3.40.1030.10">
    <property type="entry name" value="Nucleoside phosphorylase/phosphoribosyltransferase catalytic domain"/>
    <property type="match status" value="1"/>
</dbReference>
<dbReference type="Gene3D" id="1.20.970.10">
    <property type="entry name" value="Transferase, Pyrimidine Nucleoside Phosphorylase, Chain C"/>
    <property type="match status" value="1"/>
</dbReference>
<dbReference type="HAMAP" id="MF_00211">
    <property type="entry name" value="TrpD"/>
    <property type="match status" value="1"/>
</dbReference>
<dbReference type="InterPro" id="IPR005940">
    <property type="entry name" value="Anthranilate_Pribosyl_Tfrase"/>
</dbReference>
<dbReference type="InterPro" id="IPR000312">
    <property type="entry name" value="Glycosyl_Trfase_fam3"/>
</dbReference>
<dbReference type="InterPro" id="IPR017459">
    <property type="entry name" value="Glycosyl_Trfase_fam3_N_dom"/>
</dbReference>
<dbReference type="InterPro" id="IPR036320">
    <property type="entry name" value="Glycosyl_Trfase_fam3_N_dom_sf"/>
</dbReference>
<dbReference type="InterPro" id="IPR035902">
    <property type="entry name" value="Nuc_phospho_transferase"/>
</dbReference>
<dbReference type="NCBIfam" id="TIGR01245">
    <property type="entry name" value="trpD"/>
    <property type="match status" value="1"/>
</dbReference>
<dbReference type="PANTHER" id="PTHR43285">
    <property type="entry name" value="ANTHRANILATE PHOSPHORIBOSYLTRANSFERASE"/>
    <property type="match status" value="1"/>
</dbReference>
<dbReference type="PANTHER" id="PTHR43285:SF2">
    <property type="entry name" value="ANTHRANILATE PHOSPHORIBOSYLTRANSFERASE"/>
    <property type="match status" value="1"/>
</dbReference>
<dbReference type="Pfam" id="PF02885">
    <property type="entry name" value="Glycos_trans_3N"/>
    <property type="match status" value="1"/>
</dbReference>
<dbReference type="Pfam" id="PF00591">
    <property type="entry name" value="Glycos_transf_3"/>
    <property type="match status" value="1"/>
</dbReference>
<dbReference type="SUPFAM" id="SSF52418">
    <property type="entry name" value="Nucleoside phosphorylase/phosphoribosyltransferase catalytic domain"/>
    <property type="match status" value="1"/>
</dbReference>
<dbReference type="SUPFAM" id="SSF47648">
    <property type="entry name" value="Nucleoside phosphorylase/phosphoribosyltransferase N-terminal domain"/>
    <property type="match status" value="1"/>
</dbReference>
<name>TRPD_MYCLE</name>
<organism>
    <name type="scientific">Mycobacterium leprae (strain TN)</name>
    <dbReference type="NCBI Taxonomy" id="272631"/>
    <lineage>
        <taxon>Bacteria</taxon>
        <taxon>Bacillati</taxon>
        <taxon>Actinomycetota</taxon>
        <taxon>Actinomycetes</taxon>
        <taxon>Mycobacteriales</taxon>
        <taxon>Mycobacteriaceae</taxon>
        <taxon>Mycobacterium</taxon>
    </lineage>
</organism>
<feature type="chain" id="PRO_0000154460" description="Anthranilate phosphoribosyltransferase">
    <location>
        <begin position="1"/>
        <end position="366"/>
    </location>
</feature>
<feature type="binding site" evidence="1">
    <location>
        <position position="103"/>
    </location>
    <ligand>
        <name>5-phospho-alpha-D-ribose 1-diphosphate</name>
        <dbReference type="ChEBI" id="CHEBI:58017"/>
    </ligand>
</feature>
<feature type="binding site" evidence="1">
    <location>
        <position position="103"/>
    </location>
    <ligand>
        <name>anthranilate</name>
        <dbReference type="ChEBI" id="CHEBI:16567"/>
        <label>1</label>
    </ligand>
</feature>
<feature type="binding site" evidence="1">
    <location>
        <begin position="106"/>
        <end position="107"/>
    </location>
    <ligand>
        <name>5-phospho-alpha-D-ribose 1-diphosphate</name>
        <dbReference type="ChEBI" id="CHEBI:58017"/>
    </ligand>
</feature>
<feature type="binding site" evidence="1">
    <location>
        <position position="111"/>
    </location>
    <ligand>
        <name>5-phospho-alpha-D-ribose 1-diphosphate</name>
        <dbReference type="ChEBI" id="CHEBI:58017"/>
    </ligand>
</feature>
<feature type="binding site" evidence="1">
    <location>
        <begin position="113"/>
        <end position="116"/>
    </location>
    <ligand>
        <name>5-phospho-alpha-D-ribose 1-diphosphate</name>
        <dbReference type="ChEBI" id="CHEBI:58017"/>
    </ligand>
</feature>
<feature type="binding site" evidence="1">
    <location>
        <position position="115"/>
    </location>
    <ligand>
        <name>Mg(2+)</name>
        <dbReference type="ChEBI" id="CHEBI:18420"/>
        <label>1</label>
    </ligand>
</feature>
<feature type="binding site" evidence="1">
    <location>
        <begin position="131"/>
        <end position="139"/>
    </location>
    <ligand>
        <name>5-phospho-alpha-D-ribose 1-diphosphate</name>
        <dbReference type="ChEBI" id="CHEBI:58017"/>
    </ligand>
</feature>
<feature type="binding site" evidence="1">
    <location>
        <position position="134"/>
    </location>
    <ligand>
        <name>anthranilate</name>
        <dbReference type="ChEBI" id="CHEBI:16567"/>
        <label>1</label>
    </ligand>
</feature>
<feature type="binding site" evidence="1">
    <location>
        <position position="143"/>
    </location>
    <ligand>
        <name>5-phospho-alpha-D-ribose 1-diphosphate</name>
        <dbReference type="ChEBI" id="CHEBI:58017"/>
    </ligand>
</feature>
<feature type="binding site" evidence="1">
    <location>
        <position position="189"/>
    </location>
    <ligand>
        <name>anthranilate</name>
        <dbReference type="ChEBI" id="CHEBI:16567"/>
        <label>2</label>
    </ligand>
</feature>
<feature type="binding site" evidence="1">
    <location>
        <position position="247"/>
    </location>
    <ligand>
        <name>Mg(2+)</name>
        <dbReference type="ChEBI" id="CHEBI:18420"/>
        <label>2</label>
    </ligand>
</feature>
<feature type="binding site" evidence="1">
    <location>
        <position position="248"/>
    </location>
    <ligand>
        <name>Mg(2+)</name>
        <dbReference type="ChEBI" id="CHEBI:18420"/>
        <label>1</label>
    </ligand>
</feature>
<feature type="binding site" evidence="1">
    <location>
        <position position="248"/>
    </location>
    <ligand>
        <name>Mg(2+)</name>
        <dbReference type="ChEBI" id="CHEBI:18420"/>
        <label>2</label>
    </ligand>
</feature>
<comment type="function">
    <text evidence="1">Catalyzes the transfer of the phosphoribosyl group of 5-phosphorylribose-1-pyrophosphate (PRPP) to anthranilate to yield N-(5'-phosphoribosyl)-anthranilate (PRA).</text>
</comment>
<comment type="catalytic activity">
    <reaction evidence="1">
        <text>N-(5-phospho-beta-D-ribosyl)anthranilate + diphosphate = 5-phospho-alpha-D-ribose 1-diphosphate + anthranilate</text>
        <dbReference type="Rhea" id="RHEA:11768"/>
        <dbReference type="ChEBI" id="CHEBI:16567"/>
        <dbReference type="ChEBI" id="CHEBI:18277"/>
        <dbReference type="ChEBI" id="CHEBI:33019"/>
        <dbReference type="ChEBI" id="CHEBI:58017"/>
        <dbReference type="EC" id="2.4.2.18"/>
    </reaction>
</comment>
<comment type="cofactor">
    <cofactor evidence="1">
        <name>Mg(2+)</name>
        <dbReference type="ChEBI" id="CHEBI:18420"/>
    </cofactor>
    <text evidence="1">Binds 2 magnesium ions per monomer.</text>
</comment>
<comment type="pathway">
    <text evidence="1">Amino-acid biosynthesis; L-tryptophan biosynthesis; L-tryptophan from chorismate: step 2/5.</text>
</comment>
<comment type="subunit">
    <text evidence="1">Homodimer.</text>
</comment>
<comment type="similarity">
    <text evidence="1">Belongs to the anthranilate phosphoribosyltransferase family.</text>
</comment>
<sequence length="366" mass="37708">MVLSSQPPSSRSATGSVLSWPQVLGRLTAGQDLTRGQAAWAMGQVMTGNARPAQIAAFAVAMKMKVPTAAEVSELADVMLSHARKLPTEAICQDIGETVDIAGTGGDGANTVNLSTMAAIVVAAAGVPVVKHGNRASSSLSGGADTLEALGVRIDLGPEQVANSLAEIGIGFCFAPLFQPSYRYASAVRHEIGVPTVFNILGPLTNPAWPRAGLIGCAFGNLAEVMAGVFAARRSSVLVVHGDDGLDELTTTTTSTIWRVQAGTVDKLTFDPVEFGFARAHLDDLLGGDAQTNAAKVRAVLAGAKGPVRDAVVLNAAGAIVAYAGLSSHAEWSPAWDDGLARASAAIDSGAAEQLLARWVRFSQQV</sequence>
<gene>
    <name evidence="1" type="primary">trpD</name>
    <name type="ordered locus">ML0883</name>
    <name type="ORF">MLCB268.34c</name>
</gene>
<accession>O69581</accession>